<organism>
    <name type="scientific">Neurospora crassa (strain ATCC 24698 / 74-OR23-1A / CBS 708.71 / DSM 1257 / FGSC 987)</name>
    <dbReference type="NCBI Taxonomy" id="367110"/>
    <lineage>
        <taxon>Eukaryota</taxon>
        <taxon>Fungi</taxon>
        <taxon>Dikarya</taxon>
        <taxon>Ascomycota</taxon>
        <taxon>Pezizomycotina</taxon>
        <taxon>Sordariomycetes</taxon>
        <taxon>Sordariomycetidae</taxon>
        <taxon>Sordariales</taxon>
        <taxon>Sordariaceae</taxon>
        <taxon>Neurospora</taxon>
    </lineage>
</organism>
<dbReference type="EC" id="4.2.1.11"/>
<dbReference type="EMBL" id="CM002236">
    <property type="protein sequence ID" value="ESA44169.1"/>
    <property type="molecule type" value="Genomic_DNA"/>
</dbReference>
<dbReference type="EMBL" id="CM002236">
    <property type="protein sequence ID" value="ESA44170.1"/>
    <property type="molecule type" value="Genomic_DNA"/>
</dbReference>
<dbReference type="RefSeq" id="XP_011393302.1">
    <property type="nucleotide sequence ID" value="XM_011395000.1"/>
</dbReference>
<dbReference type="RefSeq" id="XP_011393303.1">
    <property type="nucleotide sequence ID" value="XM_011395001.1"/>
</dbReference>
<dbReference type="SMR" id="Q7RV85"/>
<dbReference type="FunCoup" id="Q7RV85">
    <property type="interactions" value="1062"/>
</dbReference>
<dbReference type="STRING" id="367110.Q7RV85"/>
<dbReference type="PaxDb" id="5141-EFNCRP00000009814"/>
<dbReference type="EnsemblFungi" id="ESA44169">
    <property type="protein sequence ID" value="ESA44169"/>
    <property type="gene ID" value="NCU10042"/>
</dbReference>
<dbReference type="EnsemblFungi" id="ESA44170">
    <property type="protein sequence ID" value="ESA44170"/>
    <property type="gene ID" value="NCU10042"/>
</dbReference>
<dbReference type="GeneID" id="3874106"/>
<dbReference type="KEGG" id="ncr:NCU10042"/>
<dbReference type="VEuPathDB" id="FungiDB:NCU10042"/>
<dbReference type="HOGENOM" id="CLU_031223_0_0_1"/>
<dbReference type="InParanoid" id="Q7RV85"/>
<dbReference type="OMA" id="RCMMSHR"/>
<dbReference type="OrthoDB" id="1739814at2759"/>
<dbReference type="UniPathway" id="UPA00109">
    <property type="reaction ID" value="UER00187"/>
</dbReference>
<dbReference type="Proteomes" id="UP000001805">
    <property type="component" value="Chromosome 1, Linkage Group I"/>
</dbReference>
<dbReference type="GO" id="GO:0000015">
    <property type="term" value="C:phosphopyruvate hydratase complex"/>
    <property type="evidence" value="ECO:0000318"/>
    <property type="project" value="GO_Central"/>
</dbReference>
<dbReference type="GO" id="GO:0000287">
    <property type="term" value="F:magnesium ion binding"/>
    <property type="evidence" value="ECO:0007669"/>
    <property type="project" value="InterPro"/>
</dbReference>
<dbReference type="GO" id="GO:0004634">
    <property type="term" value="F:phosphopyruvate hydratase activity"/>
    <property type="evidence" value="ECO:0000318"/>
    <property type="project" value="GO_Central"/>
</dbReference>
<dbReference type="GO" id="GO:0006096">
    <property type="term" value="P:glycolytic process"/>
    <property type="evidence" value="ECO:0000318"/>
    <property type="project" value="GO_Central"/>
</dbReference>
<dbReference type="CDD" id="cd03313">
    <property type="entry name" value="enolase"/>
    <property type="match status" value="1"/>
</dbReference>
<dbReference type="FunFam" id="3.30.390.10:FF:000001">
    <property type="entry name" value="Enolase"/>
    <property type="match status" value="1"/>
</dbReference>
<dbReference type="FunFam" id="3.20.20.120:FF:000002">
    <property type="entry name" value="Enolase 1"/>
    <property type="match status" value="1"/>
</dbReference>
<dbReference type="Gene3D" id="3.20.20.120">
    <property type="entry name" value="Enolase-like C-terminal domain"/>
    <property type="match status" value="1"/>
</dbReference>
<dbReference type="Gene3D" id="3.30.390.10">
    <property type="entry name" value="Enolase-like, N-terminal domain"/>
    <property type="match status" value="1"/>
</dbReference>
<dbReference type="HAMAP" id="MF_00318">
    <property type="entry name" value="Enolase"/>
    <property type="match status" value="1"/>
</dbReference>
<dbReference type="InterPro" id="IPR000941">
    <property type="entry name" value="Enolase"/>
</dbReference>
<dbReference type="InterPro" id="IPR036849">
    <property type="entry name" value="Enolase-like_C_sf"/>
</dbReference>
<dbReference type="InterPro" id="IPR029017">
    <property type="entry name" value="Enolase-like_N"/>
</dbReference>
<dbReference type="InterPro" id="IPR020810">
    <property type="entry name" value="Enolase_C"/>
</dbReference>
<dbReference type="InterPro" id="IPR020809">
    <property type="entry name" value="Enolase_CS"/>
</dbReference>
<dbReference type="InterPro" id="IPR020811">
    <property type="entry name" value="Enolase_N"/>
</dbReference>
<dbReference type="NCBIfam" id="TIGR01060">
    <property type="entry name" value="eno"/>
    <property type="match status" value="1"/>
</dbReference>
<dbReference type="PANTHER" id="PTHR11902">
    <property type="entry name" value="ENOLASE"/>
    <property type="match status" value="1"/>
</dbReference>
<dbReference type="PANTHER" id="PTHR11902:SF1">
    <property type="entry name" value="ENOLASE"/>
    <property type="match status" value="1"/>
</dbReference>
<dbReference type="Pfam" id="PF00113">
    <property type="entry name" value="Enolase_C"/>
    <property type="match status" value="1"/>
</dbReference>
<dbReference type="Pfam" id="PF03952">
    <property type="entry name" value="Enolase_N"/>
    <property type="match status" value="1"/>
</dbReference>
<dbReference type="PIRSF" id="PIRSF001400">
    <property type="entry name" value="Enolase"/>
    <property type="match status" value="1"/>
</dbReference>
<dbReference type="PRINTS" id="PR00148">
    <property type="entry name" value="ENOLASE"/>
</dbReference>
<dbReference type="SFLD" id="SFLDF00002">
    <property type="entry name" value="enolase"/>
    <property type="match status" value="1"/>
</dbReference>
<dbReference type="SFLD" id="SFLDG00178">
    <property type="entry name" value="enolase"/>
    <property type="match status" value="1"/>
</dbReference>
<dbReference type="SMART" id="SM01192">
    <property type="entry name" value="Enolase_C"/>
    <property type="match status" value="1"/>
</dbReference>
<dbReference type="SMART" id="SM01193">
    <property type="entry name" value="Enolase_N"/>
    <property type="match status" value="1"/>
</dbReference>
<dbReference type="SUPFAM" id="SSF51604">
    <property type="entry name" value="Enolase C-terminal domain-like"/>
    <property type="match status" value="1"/>
</dbReference>
<dbReference type="SUPFAM" id="SSF54826">
    <property type="entry name" value="Enolase N-terminal domain-like"/>
    <property type="match status" value="1"/>
</dbReference>
<dbReference type="PROSITE" id="PS00164">
    <property type="entry name" value="ENOLASE"/>
    <property type="match status" value="1"/>
</dbReference>
<feature type="chain" id="PRO_0000134054" description="Enolase">
    <location>
        <begin position="1"/>
        <end position="438"/>
    </location>
</feature>
<feature type="active site" description="Proton donor" evidence="1">
    <location>
        <position position="211"/>
    </location>
</feature>
<feature type="active site" description="Proton acceptor" evidence="1">
    <location>
        <position position="347"/>
    </location>
</feature>
<feature type="binding site" evidence="1">
    <location>
        <position position="159"/>
    </location>
    <ligand>
        <name>substrate</name>
    </ligand>
</feature>
<feature type="binding site" evidence="1">
    <location>
        <position position="168"/>
    </location>
    <ligand>
        <name>substrate</name>
    </ligand>
</feature>
<feature type="binding site" evidence="1">
    <location>
        <position position="246"/>
    </location>
    <ligand>
        <name>Mg(2+)</name>
        <dbReference type="ChEBI" id="CHEBI:18420"/>
    </ligand>
</feature>
<feature type="binding site" evidence="1">
    <location>
        <position position="297"/>
    </location>
    <ligand>
        <name>Mg(2+)</name>
        <dbReference type="ChEBI" id="CHEBI:18420"/>
    </ligand>
</feature>
<feature type="binding site" evidence="1">
    <location>
        <position position="297"/>
    </location>
    <ligand>
        <name>substrate</name>
    </ligand>
</feature>
<feature type="binding site" evidence="1">
    <location>
        <position position="322"/>
    </location>
    <ligand>
        <name>Mg(2+)</name>
        <dbReference type="ChEBI" id="CHEBI:18420"/>
    </ligand>
</feature>
<feature type="binding site" evidence="1">
    <location>
        <position position="322"/>
    </location>
    <ligand>
        <name>substrate</name>
    </ligand>
</feature>
<feature type="binding site" evidence="1">
    <location>
        <begin position="374"/>
        <end position="377"/>
    </location>
    <ligand>
        <name>substrate</name>
    </ligand>
</feature>
<feature type="binding site" evidence="1">
    <location>
        <position position="398"/>
    </location>
    <ligand>
        <name>substrate</name>
    </ligand>
</feature>
<accession>Q7RV85</accession>
<accession>V5IQV7</accession>
<gene>
    <name type="primary">emp-7</name>
    <name type="ORF">NCU10042</name>
</gene>
<keyword id="KW-0963">Cytoplasm</keyword>
<keyword id="KW-0324">Glycolysis</keyword>
<keyword id="KW-0456">Lyase</keyword>
<keyword id="KW-0460">Magnesium</keyword>
<keyword id="KW-0479">Metal-binding</keyword>
<keyword id="KW-1185">Reference proteome</keyword>
<evidence type="ECO:0000250" key="1"/>
<evidence type="ECO:0000305" key="2"/>
<proteinExistence type="inferred from homology"/>
<sequence length="438" mass="47594">MPISKIHARYVYDSRGNPTVEVDVVTELGLHRAIVPSGASTGQHEACELRDGDKTKWGGKGVLKAVQNVNEVIGPALIKENIDVKDQSKVDKFLIDLDGTPNKTKLGANAILGVSLAVAKAGAAEKGVPLYAHISDLAGTKKPYVLPVPFMNVLNGGSHAGGRLAFQEFMIVPSAAPTFSEALRQGAEVYQILKSLAKKKYGQSAGNVGDEGGVAPDIQNPEEALDLITEAIEKAGYTGQVKIAMDVASSEFYKEDVKKYDLDFKNPESDPSKWLTYEELANLYSELCKKYPIVSIEDPFAEDDWEAWSYFYKTQDIQIVADDLTVTNPLRIKKAIELKAANALLLKVNQIGTLTESIQAAKDSYADGWGVMVSHRSGETEDVTIADIVVGIRSGQIKTGAPARSERLAKLNQILRIEEELADNAIFAGEKFRKAVEL</sequence>
<comment type="catalytic activity">
    <reaction>
        <text>(2R)-2-phosphoglycerate = phosphoenolpyruvate + H2O</text>
        <dbReference type="Rhea" id="RHEA:10164"/>
        <dbReference type="ChEBI" id="CHEBI:15377"/>
        <dbReference type="ChEBI" id="CHEBI:58289"/>
        <dbReference type="ChEBI" id="CHEBI:58702"/>
        <dbReference type="EC" id="4.2.1.11"/>
    </reaction>
</comment>
<comment type="cofactor">
    <cofactor evidence="1">
        <name>Mg(2+)</name>
        <dbReference type="ChEBI" id="CHEBI:18420"/>
    </cofactor>
    <text evidence="1">Mg(2+) is required for catalysis and for stabilizing the dimer.</text>
</comment>
<comment type="pathway">
    <text>Carbohydrate degradation; glycolysis; pyruvate from D-glyceraldehyde 3-phosphate: step 4/5.</text>
</comment>
<comment type="subunit">
    <text evidence="1">Homodimer.</text>
</comment>
<comment type="subcellular location">
    <subcellularLocation>
        <location evidence="1">Cytoplasm</location>
    </subcellularLocation>
</comment>
<comment type="similarity">
    <text evidence="2">Belongs to the enolase family.</text>
</comment>
<name>ENO_NEUCR</name>
<reference key="1">
    <citation type="journal article" date="2003" name="Nature">
        <title>The genome sequence of the filamentous fungus Neurospora crassa.</title>
        <authorList>
            <person name="Galagan J.E."/>
            <person name="Calvo S.E."/>
            <person name="Borkovich K.A."/>
            <person name="Selker E.U."/>
            <person name="Read N.D."/>
            <person name="Jaffe D.B."/>
            <person name="FitzHugh W."/>
            <person name="Ma L.-J."/>
            <person name="Smirnov S."/>
            <person name="Purcell S."/>
            <person name="Rehman B."/>
            <person name="Elkins T."/>
            <person name="Engels R."/>
            <person name="Wang S."/>
            <person name="Nielsen C.B."/>
            <person name="Butler J."/>
            <person name="Endrizzi M."/>
            <person name="Qui D."/>
            <person name="Ianakiev P."/>
            <person name="Bell-Pedersen D."/>
            <person name="Nelson M.A."/>
            <person name="Werner-Washburne M."/>
            <person name="Selitrennikoff C.P."/>
            <person name="Kinsey J.A."/>
            <person name="Braun E.L."/>
            <person name="Zelter A."/>
            <person name="Schulte U."/>
            <person name="Kothe G.O."/>
            <person name="Jedd G."/>
            <person name="Mewes H.-W."/>
            <person name="Staben C."/>
            <person name="Marcotte E."/>
            <person name="Greenberg D."/>
            <person name="Roy A."/>
            <person name="Foley K."/>
            <person name="Naylor J."/>
            <person name="Stange-Thomann N."/>
            <person name="Barrett R."/>
            <person name="Gnerre S."/>
            <person name="Kamal M."/>
            <person name="Kamvysselis M."/>
            <person name="Mauceli E.W."/>
            <person name="Bielke C."/>
            <person name="Rudd S."/>
            <person name="Frishman D."/>
            <person name="Krystofova S."/>
            <person name="Rasmussen C."/>
            <person name="Metzenberg R.L."/>
            <person name="Perkins D.D."/>
            <person name="Kroken S."/>
            <person name="Cogoni C."/>
            <person name="Macino G."/>
            <person name="Catcheside D.E.A."/>
            <person name="Li W."/>
            <person name="Pratt R.J."/>
            <person name="Osmani S.A."/>
            <person name="DeSouza C.P.C."/>
            <person name="Glass N.L."/>
            <person name="Orbach M.J."/>
            <person name="Berglund J.A."/>
            <person name="Voelker R."/>
            <person name="Yarden O."/>
            <person name="Plamann M."/>
            <person name="Seiler S."/>
            <person name="Dunlap J.C."/>
            <person name="Radford A."/>
            <person name="Aramayo R."/>
            <person name="Natvig D.O."/>
            <person name="Alex L.A."/>
            <person name="Mannhaupt G."/>
            <person name="Ebbole D.J."/>
            <person name="Freitag M."/>
            <person name="Paulsen I."/>
            <person name="Sachs M.S."/>
            <person name="Lander E.S."/>
            <person name="Nusbaum C."/>
            <person name="Birren B.W."/>
        </authorList>
    </citation>
    <scope>NUCLEOTIDE SEQUENCE [LARGE SCALE GENOMIC DNA]</scope>
    <source>
        <strain>ATCC 24698 / 74-OR23-1A / CBS 708.71 / DSM 1257 / FGSC 987</strain>
    </source>
</reference>
<protein>
    <recommendedName>
        <fullName>Enolase</fullName>
        <ecNumber>4.2.1.11</ecNumber>
    </recommendedName>
    <alternativeName>
        <fullName>2-phospho-D-glycerate hydro-lyase</fullName>
    </alternativeName>
    <alternativeName>
        <fullName>2-phosphoglycerate dehydratase</fullName>
    </alternativeName>
    <alternativeName>
        <fullName>Embden-meyerhof pathway protein 7</fullName>
    </alternativeName>
</protein>